<sequence length="530" mass="59377">MSVDTYTETTKIDKLLKKPTSHFQLSTTQLYNKILDNNEGVLTELGAVNASTGKYTGRSPKDKFFVSEPSYRDNIDWGEINQPIDEETFLKLYHKVLDYLDKKDELYVFKGYAGSDKDTMLKLTVINELAWHNLFAKNMFIRPESKEEATKIKPNFTIVSAPHFKADPEVDGTKSETFVIISFKHKVILIGGTEYAGEMKKGIFSVMNYLLPMQDIMSMHCSANVGEKGDVALFFGLSGTGKTTLSADPHRKLIGDDEHGWNKNGVFNIEGGCYAKAINLSKEKEPQIFDAIKYGAILENTVVAEDGSVDFEDNRYTENTRAAYPINHIDNIVVPSKAAHPNTIIFLTADAFGVIPPISKLNKDQAMYHFLSGFTSKLAGTERGVTEPEPSFSTCFGAPFFPLHPTVYADLLGELIDLHDVDVYLVNTGWTGGKYGVGRRISLHYTRQMVNQAISGKLKNAEYTKDSTFGLSIPVEIEDVPKTILNPINAWSDKEKYKAQAEDLIQRFEKNFEKFGEKVEHIAEKGSFNK</sequence>
<proteinExistence type="inferred from homology"/>
<accession>Q5HEY8</accession>
<organism>
    <name type="scientific">Staphylococcus aureus (strain COL)</name>
    <dbReference type="NCBI Taxonomy" id="93062"/>
    <lineage>
        <taxon>Bacteria</taxon>
        <taxon>Bacillati</taxon>
        <taxon>Bacillota</taxon>
        <taxon>Bacilli</taxon>
        <taxon>Bacillales</taxon>
        <taxon>Staphylococcaceae</taxon>
        <taxon>Staphylococcus</taxon>
    </lineage>
</organism>
<feature type="chain" id="PRO_0000203843" description="Phosphoenolpyruvate carboxykinase (ATP)">
    <location>
        <begin position="1"/>
        <end position="530"/>
    </location>
</feature>
<feature type="binding site" evidence="1">
    <location>
        <position position="58"/>
    </location>
    <ligand>
        <name>substrate</name>
    </ligand>
</feature>
<feature type="binding site" evidence="1">
    <location>
        <position position="195"/>
    </location>
    <ligand>
        <name>substrate</name>
    </ligand>
</feature>
<feature type="binding site" evidence="1">
    <location>
        <position position="201"/>
    </location>
    <ligand>
        <name>ATP</name>
        <dbReference type="ChEBI" id="CHEBI:30616"/>
    </ligand>
</feature>
<feature type="binding site" evidence="1">
    <location>
        <position position="201"/>
    </location>
    <ligand>
        <name>Mn(2+)</name>
        <dbReference type="ChEBI" id="CHEBI:29035"/>
    </ligand>
</feature>
<feature type="binding site" evidence="1">
    <location>
        <position position="201"/>
    </location>
    <ligand>
        <name>substrate</name>
    </ligand>
</feature>
<feature type="binding site" evidence="1">
    <location>
        <position position="220"/>
    </location>
    <ligand>
        <name>ATP</name>
        <dbReference type="ChEBI" id="CHEBI:30616"/>
    </ligand>
</feature>
<feature type="binding site" evidence="1">
    <location>
        <position position="220"/>
    </location>
    <ligand>
        <name>Mn(2+)</name>
        <dbReference type="ChEBI" id="CHEBI:29035"/>
    </ligand>
</feature>
<feature type="binding site" evidence="1">
    <location>
        <begin position="236"/>
        <end position="244"/>
    </location>
    <ligand>
        <name>ATP</name>
        <dbReference type="ChEBI" id="CHEBI:30616"/>
    </ligand>
</feature>
<feature type="binding site" evidence="1">
    <location>
        <position position="257"/>
    </location>
    <ligand>
        <name>Mn(2+)</name>
        <dbReference type="ChEBI" id="CHEBI:29035"/>
    </ligand>
</feature>
<feature type="binding site" evidence="1">
    <location>
        <position position="285"/>
    </location>
    <ligand>
        <name>ATP</name>
        <dbReference type="ChEBI" id="CHEBI:30616"/>
    </ligand>
</feature>
<feature type="binding site" evidence="1">
    <location>
        <position position="321"/>
    </location>
    <ligand>
        <name>ATP</name>
        <dbReference type="ChEBI" id="CHEBI:30616"/>
    </ligand>
</feature>
<feature type="binding site" evidence="1">
    <location>
        <position position="321"/>
    </location>
    <ligand>
        <name>substrate</name>
    </ligand>
</feature>
<feature type="binding site" evidence="1">
    <location>
        <begin position="440"/>
        <end position="441"/>
    </location>
    <ligand>
        <name>ATP</name>
        <dbReference type="ChEBI" id="CHEBI:30616"/>
    </ligand>
</feature>
<feature type="binding site" evidence="1">
    <location>
        <position position="446"/>
    </location>
    <ligand>
        <name>ATP</name>
        <dbReference type="ChEBI" id="CHEBI:30616"/>
    </ligand>
</feature>
<protein>
    <recommendedName>
        <fullName evidence="1">Phosphoenolpyruvate carboxykinase (ATP)</fullName>
        <shortName evidence="1">PCK</shortName>
        <shortName evidence="1">PEP carboxykinase</shortName>
        <shortName evidence="1">PEPCK</shortName>
        <ecNumber evidence="1">4.1.1.49</ecNumber>
    </recommendedName>
</protein>
<evidence type="ECO:0000255" key="1">
    <source>
        <dbReference type="HAMAP-Rule" id="MF_00453"/>
    </source>
</evidence>
<dbReference type="EC" id="4.1.1.49" evidence="1"/>
<dbReference type="EMBL" id="CP000046">
    <property type="protein sequence ID" value="AAW36856.1"/>
    <property type="molecule type" value="Genomic_DNA"/>
</dbReference>
<dbReference type="RefSeq" id="WP_000109906.1">
    <property type="nucleotide sequence ID" value="NZ_JBGOFO010000013.1"/>
</dbReference>
<dbReference type="SMR" id="Q5HEY8"/>
<dbReference type="KEGG" id="sac:SACOL1838"/>
<dbReference type="HOGENOM" id="CLU_018247_0_1_9"/>
<dbReference type="UniPathway" id="UPA00138"/>
<dbReference type="Proteomes" id="UP000000530">
    <property type="component" value="Chromosome"/>
</dbReference>
<dbReference type="GO" id="GO:0005829">
    <property type="term" value="C:cytosol"/>
    <property type="evidence" value="ECO:0007669"/>
    <property type="project" value="TreeGrafter"/>
</dbReference>
<dbReference type="GO" id="GO:0005524">
    <property type="term" value="F:ATP binding"/>
    <property type="evidence" value="ECO:0007669"/>
    <property type="project" value="UniProtKB-UniRule"/>
</dbReference>
<dbReference type="GO" id="GO:0046872">
    <property type="term" value="F:metal ion binding"/>
    <property type="evidence" value="ECO:0007669"/>
    <property type="project" value="UniProtKB-KW"/>
</dbReference>
<dbReference type="GO" id="GO:0004612">
    <property type="term" value="F:phosphoenolpyruvate carboxykinase (ATP) activity"/>
    <property type="evidence" value="ECO:0007669"/>
    <property type="project" value="UniProtKB-UniRule"/>
</dbReference>
<dbReference type="GO" id="GO:0006094">
    <property type="term" value="P:gluconeogenesis"/>
    <property type="evidence" value="ECO:0007669"/>
    <property type="project" value="UniProtKB-UniRule"/>
</dbReference>
<dbReference type="CDD" id="cd00484">
    <property type="entry name" value="PEPCK_ATP"/>
    <property type="match status" value="1"/>
</dbReference>
<dbReference type="FunFam" id="2.170.8.10:FF:000001">
    <property type="entry name" value="Phosphoenolpyruvate carboxykinase (ATP)"/>
    <property type="match status" value="1"/>
</dbReference>
<dbReference type="FunFam" id="3.40.449.10:FF:000001">
    <property type="entry name" value="Phosphoenolpyruvate carboxykinase (ATP)"/>
    <property type="match status" value="1"/>
</dbReference>
<dbReference type="Gene3D" id="3.90.228.20">
    <property type="match status" value="1"/>
</dbReference>
<dbReference type="Gene3D" id="3.40.449.10">
    <property type="entry name" value="Phosphoenolpyruvate Carboxykinase, domain 1"/>
    <property type="match status" value="1"/>
</dbReference>
<dbReference type="Gene3D" id="2.170.8.10">
    <property type="entry name" value="Phosphoenolpyruvate Carboxykinase, domain 2"/>
    <property type="match status" value="1"/>
</dbReference>
<dbReference type="HAMAP" id="MF_00453">
    <property type="entry name" value="PEPCK_ATP"/>
    <property type="match status" value="1"/>
</dbReference>
<dbReference type="InterPro" id="IPR001272">
    <property type="entry name" value="PEP_carboxykinase_ATP"/>
</dbReference>
<dbReference type="InterPro" id="IPR013035">
    <property type="entry name" value="PEP_carboxykinase_C"/>
</dbReference>
<dbReference type="InterPro" id="IPR008210">
    <property type="entry name" value="PEP_carboxykinase_N"/>
</dbReference>
<dbReference type="InterPro" id="IPR015994">
    <property type="entry name" value="PEPCK_ATP_CS"/>
</dbReference>
<dbReference type="NCBIfam" id="TIGR00224">
    <property type="entry name" value="pckA"/>
    <property type="match status" value="1"/>
</dbReference>
<dbReference type="NCBIfam" id="NF006820">
    <property type="entry name" value="PRK09344.1-2"/>
    <property type="match status" value="1"/>
</dbReference>
<dbReference type="NCBIfam" id="NF006821">
    <property type="entry name" value="PRK09344.1-3"/>
    <property type="match status" value="1"/>
</dbReference>
<dbReference type="PANTHER" id="PTHR30031:SF0">
    <property type="entry name" value="PHOSPHOENOLPYRUVATE CARBOXYKINASE (ATP)"/>
    <property type="match status" value="1"/>
</dbReference>
<dbReference type="PANTHER" id="PTHR30031">
    <property type="entry name" value="PHOSPHOENOLPYRUVATE CARBOXYKINASE ATP"/>
    <property type="match status" value="1"/>
</dbReference>
<dbReference type="Pfam" id="PF01293">
    <property type="entry name" value="PEPCK_ATP"/>
    <property type="match status" value="1"/>
</dbReference>
<dbReference type="PIRSF" id="PIRSF006294">
    <property type="entry name" value="PEP_crbxkin"/>
    <property type="match status" value="1"/>
</dbReference>
<dbReference type="SUPFAM" id="SSF68923">
    <property type="entry name" value="PEP carboxykinase N-terminal domain"/>
    <property type="match status" value="1"/>
</dbReference>
<dbReference type="SUPFAM" id="SSF53795">
    <property type="entry name" value="PEP carboxykinase-like"/>
    <property type="match status" value="1"/>
</dbReference>
<dbReference type="PROSITE" id="PS00532">
    <property type="entry name" value="PEPCK_ATP"/>
    <property type="match status" value="1"/>
</dbReference>
<gene>
    <name evidence="1" type="primary">pckA</name>
    <name type="ordered locus">SACOL1838</name>
</gene>
<comment type="function">
    <text evidence="1">Involved in the gluconeogenesis. Catalyzes the conversion of oxaloacetate (OAA) to phosphoenolpyruvate (PEP) through direct phosphoryl transfer between the nucleoside triphosphate and OAA.</text>
</comment>
<comment type="catalytic activity">
    <reaction evidence="1">
        <text>oxaloacetate + ATP = phosphoenolpyruvate + ADP + CO2</text>
        <dbReference type="Rhea" id="RHEA:18617"/>
        <dbReference type="ChEBI" id="CHEBI:16452"/>
        <dbReference type="ChEBI" id="CHEBI:16526"/>
        <dbReference type="ChEBI" id="CHEBI:30616"/>
        <dbReference type="ChEBI" id="CHEBI:58702"/>
        <dbReference type="ChEBI" id="CHEBI:456216"/>
        <dbReference type="EC" id="4.1.1.49"/>
    </reaction>
</comment>
<comment type="cofactor">
    <cofactor evidence="1">
        <name>Mn(2+)</name>
        <dbReference type="ChEBI" id="CHEBI:29035"/>
    </cofactor>
    <text evidence="1">Binds 1 Mn(2+) ion per subunit.</text>
</comment>
<comment type="pathway">
    <text evidence="1">Carbohydrate biosynthesis; gluconeogenesis.</text>
</comment>
<comment type="subcellular location">
    <subcellularLocation>
        <location evidence="1">Cytoplasm</location>
    </subcellularLocation>
</comment>
<comment type="similarity">
    <text evidence="1">Belongs to the phosphoenolpyruvate carboxykinase (ATP) family.</text>
</comment>
<keyword id="KW-0067">ATP-binding</keyword>
<keyword id="KW-0963">Cytoplasm</keyword>
<keyword id="KW-0210">Decarboxylase</keyword>
<keyword id="KW-0312">Gluconeogenesis</keyword>
<keyword id="KW-0456">Lyase</keyword>
<keyword id="KW-0464">Manganese</keyword>
<keyword id="KW-0479">Metal-binding</keyword>
<keyword id="KW-0547">Nucleotide-binding</keyword>
<name>PCKA_STAAC</name>
<reference key="1">
    <citation type="journal article" date="2005" name="J. Bacteriol.">
        <title>Insights on evolution of virulence and resistance from the complete genome analysis of an early methicillin-resistant Staphylococcus aureus strain and a biofilm-producing methicillin-resistant Staphylococcus epidermidis strain.</title>
        <authorList>
            <person name="Gill S.R."/>
            <person name="Fouts D.E."/>
            <person name="Archer G.L."/>
            <person name="Mongodin E.F."/>
            <person name="DeBoy R.T."/>
            <person name="Ravel J."/>
            <person name="Paulsen I.T."/>
            <person name="Kolonay J.F."/>
            <person name="Brinkac L.M."/>
            <person name="Beanan M.J."/>
            <person name="Dodson R.J."/>
            <person name="Daugherty S.C."/>
            <person name="Madupu R."/>
            <person name="Angiuoli S.V."/>
            <person name="Durkin A.S."/>
            <person name="Haft D.H."/>
            <person name="Vamathevan J.J."/>
            <person name="Khouri H."/>
            <person name="Utterback T.R."/>
            <person name="Lee C."/>
            <person name="Dimitrov G."/>
            <person name="Jiang L."/>
            <person name="Qin H."/>
            <person name="Weidman J."/>
            <person name="Tran K."/>
            <person name="Kang K.H."/>
            <person name="Hance I.R."/>
            <person name="Nelson K.E."/>
            <person name="Fraser C.M."/>
        </authorList>
    </citation>
    <scope>NUCLEOTIDE SEQUENCE [LARGE SCALE GENOMIC DNA]</scope>
    <source>
        <strain>COL</strain>
    </source>
</reference>